<keyword id="KW-0574">Periplasm</keyword>
<keyword id="KW-0732">Signal</keyword>
<name>TOLB_CHLTA</name>
<protein>
    <recommendedName>
        <fullName evidence="3">Protein TolB homolog</fullName>
    </recommendedName>
</protein>
<feature type="signal peptide" evidence="2">
    <location>
        <begin position="1"/>
        <end position="24"/>
    </location>
</feature>
<feature type="chain" id="PRO_0000259039" description="Protein TolB homolog" evidence="2">
    <location>
        <begin position="25"/>
        <end position="431"/>
    </location>
</feature>
<evidence type="ECO:0000250" key="1">
    <source>
        <dbReference type="UniProtKB" id="P0A855"/>
    </source>
</evidence>
<evidence type="ECO:0000255" key="2"/>
<evidence type="ECO:0000305" key="3"/>
<proteinExistence type="inferred from homology"/>
<comment type="subcellular location">
    <subcellularLocation>
        <location evidence="1">Periplasm</location>
    </subcellularLocation>
</comment>
<comment type="similarity">
    <text evidence="3">Belongs to the TolB family.</text>
</comment>
<organism>
    <name type="scientific">Chlamydia trachomatis serovar A (strain ATCC VR-571B / DSM 19440 / HAR-13)</name>
    <dbReference type="NCBI Taxonomy" id="315277"/>
    <lineage>
        <taxon>Bacteria</taxon>
        <taxon>Pseudomonadati</taxon>
        <taxon>Chlamydiota</taxon>
        <taxon>Chlamydiia</taxon>
        <taxon>Chlamydiales</taxon>
        <taxon>Chlamydiaceae</taxon>
        <taxon>Chlamydia/Chlamydophila group</taxon>
        <taxon>Chlamydia</taxon>
    </lineage>
</organism>
<accession>Q3KL97</accession>
<sequence>MKGSVVFLRSLLCLLCLLPSTLHCEDLEIHVRSESSLLPIAVSLLSSPKDSRQASYLASLRDLFARDLALGDLLAPTKELAPQTIFIEASYPELIFSLKKEGKGSQKIFSLELSGDPSKDHQAIHEAADRIHFLLTRVPGISSGKIIFSLCATNSSTELKQGELWSVDYDGQHLYPLTNEHSLSVTPTWMHISHIPAYMYVSYKLGVPKIFLNTLNQPAGKKILAMQGNQFMPTFSPKTKLLAFISDRDGNPDLFVQSFSLATGAIGTPKKLLNEAFGTQGNPSFSPDGTRLVFVSNKDGTPRIYQMQISPEQHSPRLLTKKYRNSSCPTWSPDGKKIAFCSVIKGVRQICVYDLASGRDEQLTTSTEHKESPSWAADSNHLVYSAGSSNTSELFLLSLITKKSRKIVIGSGEKRFPCWGAFPSQHIKKTS</sequence>
<reference key="1">
    <citation type="journal article" date="2005" name="Infect. Immun.">
        <title>Comparative genomic analysis of Chlamydia trachomatis oculotropic and genitotropic strains.</title>
        <authorList>
            <person name="Carlson J.H."/>
            <person name="Porcella S.F."/>
            <person name="McClarty G."/>
            <person name="Caldwell H.D."/>
        </authorList>
    </citation>
    <scope>NUCLEOTIDE SEQUENCE [LARGE SCALE GENOMIC DNA]</scope>
    <source>
        <strain>ATCC VR-571B / DSM 19440 / HAR-13</strain>
    </source>
</reference>
<gene>
    <name type="primary">tolB</name>
    <name type="ordered locus">CTA_0650</name>
</gene>
<dbReference type="EMBL" id="CP000051">
    <property type="protein sequence ID" value="AAX50875.1"/>
    <property type="molecule type" value="Genomic_DNA"/>
</dbReference>
<dbReference type="RefSeq" id="WP_009873932.1">
    <property type="nucleotide sequence ID" value="NC_007429.1"/>
</dbReference>
<dbReference type="SMR" id="Q3KL97"/>
<dbReference type="KEGG" id="cta:CTA_0650"/>
<dbReference type="HOGENOM" id="CLU_635688_0_0_0"/>
<dbReference type="Proteomes" id="UP000002532">
    <property type="component" value="Chromosome"/>
</dbReference>
<dbReference type="GO" id="GO:0042597">
    <property type="term" value="C:periplasmic space"/>
    <property type="evidence" value="ECO:0007669"/>
    <property type="project" value="UniProtKB-SubCell"/>
</dbReference>
<dbReference type="Gene3D" id="2.120.10.30">
    <property type="entry name" value="TolB, C-terminal domain"/>
    <property type="match status" value="1"/>
</dbReference>
<dbReference type="InterPro" id="IPR011042">
    <property type="entry name" value="6-blade_b-propeller_TolB-like"/>
</dbReference>
<dbReference type="InterPro" id="IPR011659">
    <property type="entry name" value="PD40"/>
</dbReference>
<dbReference type="NCBIfam" id="NF002183">
    <property type="entry name" value="PRK01029.1"/>
    <property type="match status" value="1"/>
</dbReference>
<dbReference type="PANTHER" id="PTHR36842:SF1">
    <property type="entry name" value="PROTEIN TOLB"/>
    <property type="match status" value="1"/>
</dbReference>
<dbReference type="PANTHER" id="PTHR36842">
    <property type="entry name" value="PROTEIN TOLB HOMOLOG"/>
    <property type="match status" value="1"/>
</dbReference>
<dbReference type="Pfam" id="PF07676">
    <property type="entry name" value="PD40"/>
    <property type="match status" value="4"/>
</dbReference>
<dbReference type="SUPFAM" id="SSF82171">
    <property type="entry name" value="DPP6 N-terminal domain-like"/>
    <property type="match status" value="1"/>
</dbReference>